<accession>B3EWU8</accession>
<feature type="peptide" id="PRO_0000421207" description="Short cationic peptide-1g" evidence="1">
    <location>
        <begin position="1"/>
        <end position="9"/>
    </location>
</feature>
<keyword id="KW-0903">Direct protein sequencing</keyword>
<keyword id="KW-0964">Secreted</keyword>
<keyword id="KW-0800">Toxin</keyword>
<reference key="1">
    <citation type="journal article" date="2012" name="FEBS J.">
        <title>Multicomponent venom of the spider Cupiennius salei: a bioanalytical investigation applying different strategies.</title>
        <authorList>
            <person name="Trachsel C."/>
            <person name="Siegemund D."/>
            <person name="Kampfer U."/>
            <person name="Kopp L.S."/>
            <person name="Buhr C."/>
            <person name="Grossmann J."/>
            <person name="Luthi C."/>
            <person name="Cunningham M."/>
            <person name="Nentwig W."/>
            <person name="Kuhn-Nentwig L."/>
            <person name="Schurch S."/>
            <person name="Schaller J."/>
        </authorList>
    </citation>
    <scope>PROTEIN SEQUENCE</scope>
    <scope>MASS SPECTROMETRY</scope>
    <source>
        <tissue>Venom</tissue>
    </source>
</reference>
<reference key="2">
    <citation type="unpublished observations" date="2015-06">
        <authorList>
            <person name="Kuhn-Nentwig L."/>
            <person name="Gohel T."/>
        </authorList>
    </citation>
    <scope>NOMENCLATURE</scope>
</reference>
<sequence>GFGSLFKFL</sequence>
<organism>
    <name type="scientific">Cupiennius salei</name>
    <name type="common">American wandering spider</name>
    <dbReference type="NCBI Taxonomy" id="6928"/>
    <lineage>
        <taxon>Eukaryota</taxon>
        <taxon>Metazoa</taxon>
        <taxon>Ecdysozoa</taxon>
        <taxon>Arthropoda</taxon>
        <taxon>Chelicerata</taxon>
        <taxon>Arachnida</taxon>
        <taxon>Araneae</taxon>
        <taxon>Araneomorphae</taxon>
        <taxon>Entelegynae</taxon>
        <taxon>Lycosoidea</taxon>
        <taxon>Ctenidae</taxon>
        <taxon>Cupiennius</taxon>
    </lineage>
</organism>
<proteinExistence type="evidence at protein level"/>
<dbReference type="GO" id="GO:0005576">
    <property type="term" value="C:extracellular region"/>
    <property type="evidence" value="ECO:0007669"/>
    <property type="project" value="UniProtKB-SubCell"/>
</dbReference>
<dbReference type="GO" id="GO:0090729">
    <property type="term" value="F:toxin activity"/>
    <property type="evidence" value="ECO:0007669"/>
    <property type="project" value="UniProtKB-KW"/>
</dbReference>
<name>TXS1G_CUPSA</name>
<evidence type="ECO:0000269" key="1">
    <source>
    </source>
</evidence>
<evidence type="ECO:0000303" key="2">
    <source>
    </source>
</evidence>
<evidence type="ECO:0000303" key="3">
    <source ref="2"/>
</evidence>
<evidence type="ECO:0000305" key="4"/>
<evidence type="ECO:0000305" key="5">
    <source>
    </source>
</evidence>
<protein>
    <recommendedName>
        <fullName evidence="3">Short cationic peptide-1g</fullName>
        <shortName evidence="3">SCP-1g</shortName>
    </recommendedName>
    <alternativeName>
        <fullName evidence="2">Cupiennin 1-like peptide-1h</fullName>
    </alternativeName>
    <alternativeName>
        <fullName evidence="2">Short cationic peptide-1h</fullName>
        <shortName evidence="2">SCP-1h</shortName>
    </alternativeName>
    <alternativeName>
        <fullName evidence="3">Truncated variant of Cupiennin 1 family</fullName>
    </alternativeName>
</protein>
<comment type="subcellular location">
    <subcellularLocation>
        <location evidence="1">Secreted</location>
    </subcellularLocation>
</comment>
<comment type="tissue specificity">
    <text evidence="5">Expressed by the venom gland.</text>
</comment>
<comment type="mass spectrometry"/>
<comment type="similarity">
    <text evidence="4">Belongs to the cationic peptide 04 (cupiennin) family. 03 subfamily.</text>
</comment>